<evidence type="ECO:0000255" key="1">
    <source>
        <dbReference type="HAMAP-Rule" id="MF_00170"/>
    </source>
</evidence>
<proteinExistence type="inferred from homology"/>
<organism>
    <name type="scientific">Buchnera aphidicola subsp. Acyrthosiphon pisum (strain APS)</name>
    <name type="common">Acyrthosiphon pisum symbiotic bacterium</name>
    <dbReference type="NCBI Taxonomy" id="107806"/>
    <lineage>
        <taxon>Bacteria</taxon>
        <taxon>Pseudomonadati</taxon>
        <taxon>Pseudomonadota</taxon>
        <taxon>Gammaproteobacteria</taxon>
        <taxon>Enterobacterales</taxon>
        <taxon>Erwiniaceae</taxon>
        <taxon>Buchnera</taxon>
    </lineage>
</organism>
<feature type="chain" id="PRO_0000158398" description="Ribose-5-phosphate isomerase A">
    <location>
        <begin position="1"/>
        <end position="223"/>
    </location>
</feature>
<feature type="active site" description="Proton acceptor" evidence="1">
    <location>
        <position position="103"/>
    </location>
</feature>
<feature type="binding site" evidence="1">
    <location>
        <begin position="28"/>
        <end position="31"/>
    </location>
    <ligand>
        <name>substrate</name>
    </ligand>
</feature>
<feature type="binding site" evidence="1">
    <location>
        <begin position="81"/>
        <end position="84"/>
    </location>
    <ligand>
        <name>substrate</name>
    </ligand>
</feature>
<feature type="binding site" evidence="1">
    <location>
        <begin position="94"/>
        <end position="97"/>
    </location>
    <ligand>
        <name>substrate</name>
    </ligand>
</feature>
<feature type="binding site" evidence="1">
    <location>
        <position position="121"/>
    </location>
    <ligand>
        <name>substrate</name>
    </ligand>
</feature>
<protein>
    <recommendedName>
        <fullName evidence="1">Ribose-5-phosphate isomerase A</fullName>
        <ecNumber evidence="1">5.3.1.6</ecNumber>
    </recommendedName>
    <alternativeName>
        <fullName evidence="1">Phosphoriboisomerase A</fullName>
        <shortName evidence="1">PRI</shortName>
    </alternativeName>
</protein>
<reference key="1">
    <citation type="journal article" date="2000" name="Nature">
        <title>Genome sequence of the endocellular bacterial symbiont of aphids Buchnera sp. APS.</title>
        <authorList>
            <person name="Shigenobu S."/>
            <person name="Watanabe H."/>
            <person name="Hattori M."/>
            <person name="Sakaki Y."/>
            <person name="Ishikawa H."/>
        </authorList>
    </citation>
    <scope>NUCLEOTIDE SEQUENCE [LARGE SCALE GENOMIC DNA]</scope>
    <source>
        <strain>APS</strain>
    </source>
</reference>
<gene>
    <name evidence="1" type="primary">rpiA</name>
    <name type="ordered locus">BU411</name>
</gene>
<keyword id="KW-0413">Isomerase</keyword>
<keyword id="KW-1185">Reference proteome</keyword>
<name>RPIA_BUCAI</name>
<dbReference type="EC" id="5.3.1.6" evidence="1"/>
<dbReference type="EMBL" id="BA000003">
    <property type="protein sequence ID" value="BAB13112.1"/>
    <property type="molecule type" value="Genomic_DNA"/>
</dbReference>
<dbReference type="RefSeq" id="NP_240226.1">
    <property type="nucleotide sequence ID" value="NC_002528.1"/>
</dbReference>
<dbReference type="RefSeq" id="WP_009874367.1">
    <property type="nucleotide sequence ID" value="NC_002528.1"/>
</dbReference>
<dbReference type="SMR" id="P57489"/>
<dbReference type="STRING" id="563178.BUAP5A_404"/>
<dbReference type="EnsemblBacteria" id="BAB13112">
    <property type="protein sequence ID" value="BAB13112"/>
    <property type="gene ID" value="BAB13112"/>
</dbReference>
<dbReference type="KEGG" id="buc:BU411"/>
<dbReference type="PATRIC" id="fig|107806.10.peg.423"/>
<dbReference type="eggNOG" id="COG0120">
    <property type="taxonomic scope" value="Bacteria"/>
</dbReference>
<dbReference type="HOGENOM" id="CLU_056590_1_1_6"/>
<dbReference type="UniPathway" id="UPA00115">
    <property type="reaction ID" value="UER00412"/>
</dbReference>
<dbReference type="Proteomes" id="UP000001806">
    <property type="component" value="Chromosome"/>
</dbReference>
<dbReference type="GO" id="GO:0005829">
    <property type="term" value="C:cytosol"/>
    <property type="evidence" value="ECO:0007669"/>
    <property type="project" value="TreeGrafter"/>
</dbReference>
<dbReference type="GO" id="GO:0004751">
    <property type="term" value="F:ribose-5-phosphate isomerase activity"/>
    <property type="evidence" value="ECO:0007669"/>
    <property type="project" value="UniProtKB-UniRule"/>
</dbReference>
<dbReference type="GO" id="GO:0006014">
    <property type="term" value="P:D-ribose metabolic process"/>
    <property type="evidence" value="ECO:0007669"/>
    <property type="project" value="TreeGrafter"/>
</dbReference>
<dbReference type="GO" id="GO:0009052">
    <property type="term" value="P:pentose-phosphate shunt, non-oxidative branch"/>
    <property type="evidence" value="ECO:0007669"/>
    <property type="project" value="UniProtKB-UniRule"/>
</dbReference>
<dbReference type="CDD" id="cd01398">
    <property type="entry name" value="RPI_A"/>
    <property type="match status" value="1"/>
</dbReference>
<dbReference type="FunFam" id="3.30.70.260:FF:000004">
    <property type="entry name" value="Ribose-5-phosphate isomerase A"/>
    <property type="match status" value="1"/>
</dbReference>
<dbReference type="FunFam" id="3.40.50.1360:FF:000001">
    <property type="entry name" value="Ribose-5-phosphate isomerase A"/>
    <property type="match status" value="1"/>
</dbReference>
<dbReference type="Gene3D" id="3.30.70.260">
    <property type="match status" value="1"/>
</dbReference>
<dbReference type="Gene3D" id="3.40.50.1360">
    <property type="match status" value="1"/>
</dbReference>
<dbReference type="HAMAP" id="MF_00170">
    <property type="entry name" value="Rib_5P_isom_A"/>
    <property type="match status" value="1"/>
</dbReference>
<dbReference type="InterPro" id="IPR037171">
    <property type="entry name" value="NagB/RpiA_transferase-like"/>
</dbReference>
<dbReference type="InterPro" id="IPR020672">
    <property type="entry name" value="Ribose5P_isomerase_typA_subgr"/>
</dbReference>
<dbReference type="InterPro" id="IPR004788">
    <property type="entry name" value="Ribose5P_isomerase_type_A"/>
</dbReference>
<dbReference type="NCBIfam" id="NF001924">
    <property type="entry name" value="PRK00702.1"/>
    <property type="match status" value="1"/>
</dbReference>
<dbReference type="NCBIfam" id="TIGR00021">
    <property type="entry name" value="rpiA"/>
    <property type="match status" value="1"/>
</dbReference>
<dbReference type="PANTHER" id="PTHR11934">
    <property type="entry name" value="RIBOSE-5-PHOSPHATE ISOMERASE"/>
    <property type="match status" value="1"/>
</dbReference>
<dbReference type="PANTHER" id="PTHR11934:SF0">
    <property type="entry name" value="RIBOSE-5-PHOSPHATE ISOMERASE"/>
    <property type="match status" value="1"/>
</dbReference>
<dbReference type="Pfam" id="PF06026">
    <property type="entry name" value="Rib_5-P_isom_A"/>
    <property type="match status" value="1"/>
</dbReference>
<dbReference type="SUPFAM" id="SSF75445">
    <property type="entry name" value="D-ribose-5-phosphate isomerase (RpiA), lid domain"/>
    <property type="match status" value="1"/>
</dbReference>
<dbReference type="SUPFAM" id="SSF100950">
    <property type="entry name" value="NagB/RpiA/CoA transferase-like"/>
    <property type="match status" value="1"/>
</dbReference>
<accession>P57489</accession>
<comment type="function">
    <text evidence="1">Catalyzes the reversible conversion of ribose-5-phosphate to ribulose 5-phosphate.</text>
</comment>
<comment type="catalytic activity">
    <reaction evidence="1">
        <text>aldehydo-D-ribose 5-phosphate = D-ribulose 5-phosphate</text>
        <dbReference type="Rhea" id="RHEA:14657"/>
        <dbReference type="ChEBI" id="CHEBI:58121"/>
        <dbReference type="ChEBI" id="CHEBI:58273"/>
        <dbReference type="EC" id="5.3.1.6"/>
    </reaction>
</comment>
<comment type="pathway">
    <text evidence="1">Carbohydrate degradation; pentose phosphate pathway; D-ribose 5-phosphate from D-ribulose 5-phosphate (non-oxidative stage): step 1/1.</text>
</comment>
<comment type="subunit">
    <text evidence="1">Homodimer.</text>
</comment>
<comment type="similarity">
    <text evidence="1">Belongs to the ribose 5-phosphate isomerase family.</text>
</comment>
<sequence length="223" mass="24417">MNLNKLKKKAAWAALDYIDPGTIIGVGTGTTIFYFIEALGTIKNLIYGAVSSSNSSTVLLKKHGIEVFDLKNFSSLAIYVDSADEINNHMQMIKGGGGALTREKIIASMSKKFVCIIDKSKKVDVLGTFPLPIEIIPMALSYIFREMIKIGGTPKYRKNVITDNGNIIIDVYNLCIKDPISMEKKINSLPGVVTVGLFASRSADIVLIGTQKGIRTINKKENR</sequence>